<evidence type="ECO:0000255" key="1">
    <source>
        <dbReference type="HAMAP-Rule" id="MF_01720"/>
    </source>
</evidence>
<comment type="function">
    <text evidence="1">Part of the tripartite efflux system MacAB-TolC. MacB is a non-canonical ABC transporter that contains transmembrane domains (TMD), which form a pore in the inner membrane, and an ATP-binding domain (NBD), which is responsible for energy generation. Confers resistance against macrolides.</text>
</comment>
<comment type="subunit">
    <text evidence="1">Homodimer. Part of the tripartite efflux system MacAB-TolC, which is composed of an inner membrane transporter, MacB, a periplasmic membrane fusion protein, MacA, and an outer membrane component, TolC. The complex forms a large protein conduit and can translocate molecules across both the inner and outer membranes. Interacts with MacA.</text>
</comment>
<comment type="subcellular location">
    <subcellularLocation>
        <location evidence="1">Cell inner membrane</location>
        <topology evidence="1">Multi-pass membrane protein</topology>
    </subcellularLocation>
</comment>
<comment type="similarity">
    <text evidence="1">Belongs to the ABC transporter superfamily. Macrolide exporter (TC 3.A.1.122) family.</text>
</comment>
<organism>
    <name type="scientific">Shigella boydii serotype 4 (strain Sb227)</name>
    <dbReference type="NCBI Taxonomy" id="300268"/>
    <lineage>
        <taxon>Bacteria</taxon>
        <taxon>Pseudomonadati</taxon>
        <taxon>Pseudomonadota</taxon>
        <taxon>Gammaproteobacteria</taxon>
        <taxon>Enterobacterales</taxon>
        <taxon>Enterobacteriaceae</taxon>
        <taxon>Shigella</taxon>
    </lineage>
</organism>
<feature type="chain" id="PRO_0000269979" description="Macrolide export ATP-binding/permease protein MacB">
    <location>
        <begin position="1"/>
        <end position="648"/>
    </location>
</feature>
<feature type="transmembrane region" description="Helical" evidence="1">
    <location>
        <begin position="273"/>
        <end position="293"/>
    </location>
</feature>
<feature type="transmembrane region" description="Helical" evidence="1">
    <location>
        <begin position="523"/>
        <end position="543"/>
    </location>
</feature>
<feature type="transmembrane region" description="Helical" evidence="1">
    <location>
        <begin position="576"/>
        <end position="596"/>
    </location>
</feature>
<feature type="transmembrane region" description="Helical" evidence="1">
    <location>
        <begin position="600"/>
        <end position="620"/>
    </location>
</feature>
<feature type="domain" description="ABC transporter" evidence="1">
    <location>
        <begin position="5"/>
        <end position="243"/>
    </location>
</feature>
<feature type="binding site" evidence="1">
    <location>
        <begin position="41"/>
        <end position="48"/>
    </location>
    <ligand>
        <name>ATP</name>
        <dbReference type="ChEBI" id="CHEBI:30616"/>
    </ligand>
</feature>
<proteinExistence type="inferred from homology"/>
<protein>
    <recommendedName>
        <fullName evidence="1">Macrolide export ATP-binding/permease protein MacB</fullName>
        <ecNumber evidence="1">7.6.2.-</ecNumber>
    </recommendedName>
</protein>
<keyword id="KW-0046">Antibiotic resistance</keyword>
<keyword id="KW-0067">ATP-binding</keyword>
<keyword id="KW-0997">Cell inner membrane</keyword>
<keyword id="KW-1003">Cell membrane</keyword>
<keyword id="KW-0472">Membrane</keyword>
<keyword id="KW-0547">Nucleotide-binding</keyword>
<keyword id="KW-1278">Translocase</keyword>
<keyword id="KW-0812">Transmembrane</keyword>
<keyword id="KW-1133">Transmembrane helix</keyword>
<keyword id="KW-0813">Transport</keyword>
<gene>
    <name evidence="1" type="primary">macB</name>
    <name type="ordered locus">SBO_0812</name>
</gene>
<reference key="1">
    <citation type="journal article" date="2005" name="Nucleic Acids Res.">
        <title>Genome dynamics and diversity of Shigella species, the etiologic agents of bacillary dysentery.</title>
        <authorList>
            <person name="Yang F."/>
            <person name="Yang J."/>
            <person name="Zhang X."/>
            <person name="Chen L."/>
            <person name="Jiang Y."/>
            <person name="Yan Y."/>
            <person name="Tang X."/>
            <person name="Wang J."/>
            <person name="Xiong Z."/>
            <person name="Dong J."/>
            <person name="Xue Y."/>
            <person name="Zhu Y."/>
            <person name="Xu X."/>
            <person name="Sun L."/>
            <person name="Chen S."/>
            <person name="Nie H."/>
            <person name="Peng J."/>
            <person name="Xu J."/>
            <person name="Wang Y."/>
            <person name="Yuan Z."/>
            <person name="Wen Y."/>
            <person name="Yao Z."/>
            <person name="Shen Y."/>
            <person name="Qiang B."/>
            <person name="Hou Y."/>
            <person name="Yu J."/>
            <person name="Jin Q."/>
        </authorList>
    </citation>
    <scope>NUCLEOTIDE SEQUENCE [LARGE SCALE GENOMIC DNA]</scope>
    <source>
        <strain>Sb227</strain>
    </source>
</reference>
<sequence length="648" mass="70717">MTPLLELKDIRRSYPAGDEQVEVLKGITLDIYAGEMVAIVGASGSGKSTLMNILGCLDKATSGTYRVAGQDVATLDADALAQLRREHFGFIFQRYHLLSHLTAEQNVEVPAVYAGLERKQRLLRAQELLQRLGLEDRTEYYPAQLSGGQQQRVSIARALMNGGQVILADEPTGALDSHSGEEVMAILHQLRDRGHMVIIVTHDPQVAAQAERVIEIRDGEIVRNPPAIEKVNVAGGTEPVVNTVSGWRQFVSGFNEALTMAWRALAANKMRTLLTMLGIIIGIASVVSIVVVGDAAKQMVLADIRSIGTNTIDVYPGKDFGDDDPQYQQALKYDDLIAIQKQPWVASATPAVSQNLRLRYNNVDVAASANGVSGDYFNVYGMTFSEGNTFNQEQLNGRAQVVVLDSNTRRQLFPHKADVVGEVILVGNMPARVIGVAEEKQSMFGSSKVLRVWLPYSTMSGRVMGQSWLNSITVRVKEGFDSAEAEQQLTRLLSLRHGKKDFFTWNMDGVLKTVEKTTRTLQLFLTLVAVISLVVGGIGVMNIMLVSVTERTREIGIRMAVGARASDVLQQFLIEAVLVCLVGGALGITLSLLIAFTLQLFLPGWEIGFSPLALLLAFLCSTATGILFGWLPARNAARLDPVDALVRE</sequence>
<dbReference type="EC" id="7.6.2.-" evidence="1"/>
<dbReference type="EMBL" id="CP000036">
    <property type="protein sequence ID" value="ABB65485.1"/>
    <property type="molecule type" value="Genomic_DNA"/>
</dbReference>
<dbReference type="RefSeq" id="WP_000188170.1">
    <property type="nucleotide sequence ID" value="NC_007613.1"/>
</dbReference>
<dbReference type="SMR" id="Q323M3"/>
<dbReference type="KEGG" id="sbo:SBO_0812"/>
<dbReference type="HOGENOM" id="CLU_000604_78_3_6"/>
<dbReference type="Proteomes" id="UP000007067">
    <property type="component" value="Chromosome"/>
</dbReference>
<dbReference type="GO" id="GO:0005886">
    <property type="term" value="C:plasma membrane"/>
    <property type="evidence" value="ECO:0007669"/>
    <property type="project" value="UniProtKB-SubCell"/>
</dbReference>
<dbReference type="GO" id="GO:0005524">
    <property type="term" value="F:ATP binding"/>
    <property type="evidence" value="ECO:0007669"/>
    <property type="project" value="UniProtKB-KW"/>
</dbReference>
<dbReference type="GO" id="GO:0016887">
    <property type="term" value="F:ATP hydrolysis activity"/>
    <property type="evidence" value="ECO:0007669"/>
    <property type="project" value="InterPro"/>
</dbReference>
<dbReference type="GO" id="GO:0022857">
    <property type="term" value="F:transmembrane transporter activity"/>
    <property type="evidence" value="ECO:0007669"/>
    <property type="project" value="TreeGrafter"/>
</dbReference>
<dbReference type="GO" id="GO:0046677">
    <property type="term" value="P:response to antibiotic"/>
    <property type="evidence" value="ECO:0007669"/>
    <property type="project" value="UniProtKB-KW"/>
</dbReference>
<dbReference type="CDD" id="cd03255">
    <property type="entry name" value="ABC_MJ0796_LolCDE_FtsE"/>
    <property type="match status" value="1"/>
</dbReference>
<dbReference type="FunFam" id="3.40.50.300:FF:000032">
    <property type="entry name" value="Export ABC transporter ATP-binding protein"/>
    <property type="match status" value="1"/>
</dbReference>
<dbReference type="Gene3D" id="3.40.50.300">
    <property type="entry name" value="P-loop containing nucleotide triphosphate hydrolases"/>
    <property type="match status" value="1"/>
</dbReference>
<dbReference type="InterPro" id="IPR003593">
    <property type="entry name" value="AAA+_ATPase"/>
</dbReference>
<dbReference type="InterPro" id="IPR003838">
    <property type="entry name" value="ABC3_permease_C"/>
</dbReference>
<dbReference type="InterPro" id="IPR003439">
    <property type="entry name" value="ABC_transporter-like_ATP-bd"/>
</dbReference>
<dbReference type="InterPro" id="IPR017871">
    <property type="entry name" value="ABC_transporter-like_CS"/>
</dbReference>
<dbReference type="InterPro" id="IPR017911">
    <property type="entry name" value="MacB-like_ATP-bd"/>
</dbReference>
<dbReference type="InterPro" id="IPR025857">
    <property type="entry name" value="MacB_PCD"/>
</dbReference>
<dbReference type="InterPro" id="IPR050250">
    <property type="entry name" value="Macrolide_Exporter_MacB"/>
</dbReference>
<dbReference type="InterPro" id="IPR027417">
    <property type="entry name" value="P-loop_NTPase"/>
</dbReference>
<dbReference type="NCBIfam" id="NF007826">
    <property type="entry name" value="PRK10535.1"/>
    <property type="match status" value="1"/>
</dbReference>
<dbReference type="PANTHER" id="PTHR30572:SF7">
    <property type="entry name" value="MACROLIDE EXPORT ATP-BINDING_PERMEASE PROTEIN MACB"/>
    <property type="match status" value="1"/>
</dbReference>
<dbReference type="PANTHER" id="PTHR30572">
    <property type="entry name" value="MEMBRANE COMPONENT OF TRANSPORTER-RELATED"/>
    <property type="match status" value="1"/>
</dbReference>
<dbReference type="Pfam" id="PF00005">
    <property type="entry name" value="ABC_tran"/>
    <property type="match status" value="1"/>
</dbReference>
<dbReference type="Pfam" id="PF02687">
    <property type="entry name" value="FtsX"/>
    <property type="match status" value="1"/>
</dbReference>
<dbReference type="Pfam" id="PF12704">
    <property type="entry name" value="MacB_PCD"/>
    <property type="match status" value="1"/>
</dbReference>
<dbReference type="SMART" id="SM00382">
    <property type="entry name" value="AAA"/>
    <property type="match status" value="1"/>
</dbReference>
<dbReference type="SUPFAM" id="SSF52540">
    <property type="entry name" value="P-loop containing nucleoside triphosphate hydrolases"/>
    <property type="match status" value="1"/>
</dbReference>
<dbReference type="PROSITE" id="PS00211">
    <property type="entry name" value="ABC_TRANSPORTER_1"/>
    <property type="match status" value="1"/>
</dbReference>
<dbReference type="PROSITE" id="PS50893">
    <property type="entry name" value="ABC_TRANSPORTER_2"/>
    <property type="match status" value="1"/>
</dbReference>
<dbReference type="PROSITE" id="PS51267">
    <property type="entry name" value="MACB"/>
    <property type="match status" value="1"/>
</dbReference>
<accession>Q323M3</accession>
<name>MACB_SHIBS</name>